<comment type="function">
    <text evidence="1">Forms part of the ribosomal stalk which helps the ribosome interact with GTP-bound translation factors. Is thus essential for accurate translation.</text>
</comment>
<comment type="subunit">
    <text evidence="1">Homodimer. Part of the ribosomal stalk of the 50S ribosomal subunit. Forms a multimeric L10(L12)X complex, where L10 forms an elongated spine to which 2 to 4 L12 dimers bind in a sequential fashion. Binds GTP-bound translation factors.</text>
</comment>
<comment type="similarity">
    <text evidence="1">Belongs to the bacterial ribosomal protein bL12 family.</text>
</comment>
<accession>A4YBZ1</accession>
<dbReference type="EMBL" id="CP000681">
    <property type="protein sequence ID" value="ABP77474.1"/>
    <property type="molecule type" value="Genomic_DNA"/>
</dbReference>
<dbReference type="SMR" id="A4YBZ1"/>
<dbReference type="STRING" id="319224.Sputcn32_3767"/>
<dbReference type="KEGG" id="spc:Sputcn32_3767"/>
<dbReference type="eggNOG" id="COG0222">
    <property type="taxonomic scope" value="Bacteria"/>
</dbReference>
<dbReference type="HOGENOM" id="CLU_086499_3_2_6"/>
<dbReference type="GO" id="GO:0022625">
    <property type="term" value="C:cytosolic large ribosomal subunit"/>
    <property type="evidence" value="ECO:0007669"/>
    <property type="project" value="TreeGrafter"/>
</dbReference>
<dbReference type="GO" id="GO:0003729">
    <property type="term" value="F:mRNA binding"/>
    <property type="evidence" value="ECO:0007669"/>
    <property type="project" value="TreeGrafter"/>
</dbReference>
<dbReference type="GO" id="GO:0003735">
    <property type="term" value="F:structural constituent of ribosome"/>
    <property type="evidence" value="ECO:0007669"/>
    <property type="project" value="InterPro"/>
</dbReference>
<dbReference type="GO" id="GO:0006412">
    <property type="term" value="P:translation"/>
    <property type="evidence" value="ECO:0007669"/>
    <property type="project" value="UniProtKB-UniRule"/>
</dbReference>
<dbReference type="CDD" id="cd00387">
    <property type="entry name" value="Ribosomal_L7_L12"/>
    <property type="match status" value="1"/>
</dbReference>
<dbReference type="FunFam" id="1.20.5.710:FF:000001">
    <property type="entry name" value="50S ribosomal protein L7/L12"/>
    <property type="match status" value="1"/>
</dbReference>
<dbReference type="FunFam" id="3.30.1390.10:FF:000001">
    <property type="entry name" value="50S ribosomal protein L7/L12"/>
    <property type="match status" value="1"/>
</dbReference>
<dbReference type="Gene3D" id="3.30.1390.10">
    <property type="match status" value="1"/>
</dbReference>
<dbReference type="Gene3D" id="1.20.5.710">
    <property type="entry name" value="Single helix bin"/>
    <property type="match status" value="1"/>
</dbReference>
<dbReference type="HAMAP" id="MF_00368">
    <property type="entry name" value="Ribosomal_bL12"/>
    <property type="match status" value="1"/>
</dbReference>
<dbReference type="InterPro" id="IPR000206">
    <property type="entry name" value="Ribosomal_bL12"/>
</dbReference>
<dbReference type="InterPro" id="IPR013823">
    <property type="entry name" value="Ribosomal_bL12_C"/>
</dbReference>
<dbReference type="InterPro" id="IPR014719">
    <property type="entry name" value="Ribosomal_bL12_C/ClpS-like"/>
</dbReference>
<dbReference type="InterPro" id="IPR008932">
    <property type="entry name" value="Ribosomal_bL12_oligo"/>
</dbReference>
<dbReference type="InterPro" id="IPR036235">
    <property type="entry name" value="Ribosomal_bL12_oligo_N_sf"/>
</dbReference>
<dbReference type="NCBIfam" id="TIGR00855">
    <property type="entry name" value="L12"/>
    <property type="match status" value="1"/>
</dbReference>
<dbReference type="PANTHER" id="PTHR45987">
    <property type="entry name" value="39S RIBOSOMAL PROTEIN L12"/>
    <property type="match status" value="1"/>
</dbReference>
<dbReference type="PANTHER" id="PTHR45987:SF4">
    <property type="entry name" value="LARGE RIBOSOMAL SUBUNIT PROTEIN BL12M"/>
    <property type="match status" value="1"/>
</dbReference>
<dbReference type="Pfam" id="PF00542">
    <property type="entry name" value="Ribosomal_L12"/>
    <property type="match status" value="1"/>
</dbReference>
<dbReference type="Pfam" id="PF16320">
    <property type="entry name" value="Ribosomal_L12_N"/>
    <property type="match status" value="1"/>
</dbReference>
<dbReference type="SUPFAM" id="SSF54736">
    <property type="entry name" value="ClpS-like"/>
    <property type="match status" value="1"/>
</dbReference>
<dbReference type="SUPFAM" id="SSF48300">
    <property type="entry name" value="Ribosomal protein L7/12, oligomerisation (N-terminal) domain"/>
    <property type="match status" value="1"/>
</dbReference>
<organism>
    <name type="scientific">Shewanella putrefaciens (strain CN-32 / ATCC BAA-453)</name>
    <dbReference type="NCBI Taxonomy" id="319224"/>
    <lineage>
        <taxon>Bacteria</taxon>
        <taxon>Pseudomonadati</taxon>
        <taxon>Pseudomonadota</taxon>
        <taxon>Gammaproteobacteria</taxon>
        <taxon>Alteromonadales</taxon>
        <taxon>Shewanellaceae</taxon>
        <taxon>Shewanella</taxon>
    </lineage>
</organism>
<evidence type="ECO:0000255" key="1">
    <source>
        <dbReference type="HAMAP-Rule" id="MF_00368"/>
    </source>
</evidence>
<evidence type="ECO:0000305" key="2"/>
<proteinExistence type="inferred from homology"/>
<feature type="chain" id="PRO_1000007085" description="Large ribosomal subunit protein bL12">
    <location>
        <begin position="1"/>
        <end position="122"/>
    </location>
</feature>
<keyword id="KW-0687">Ribonucleoprotein</keyword>
<keyword id="KW-0689">Ribosomal protein</keyword>
<gene>
    <name evidence="1" type="primary">rplL</name>
    <name type="ordered locus">Sputcn32_3767</name>
</gene>
<name>RL7_SHEPC</name>
<protein>
    <recommendedName>
        <fullName evidence="1">Large ribosomal subunit protein bL12</fullName>
    </recommendedName>
    <alternativeName>
        <fullName evidence="2">50S ribosomal protein L7/L12</fullName>
    </alternativeName>
</protein>
<sequence length="122" mass="12516">MSITKDQILEAFAAMSVMEVVELIEAMEEKFGVSAAAAVVSGGGEAAAAVEEQTEFNVILTAHGDNKVAVIKAIRGATGLGLKEAKAMSEAAPVAVKEGVSKEEAEALKKELVEAGASVEIK</sequence>
<reference key="1">
    <citation type="submission" date="2007-04" db="EMBL/GenBank/DDBJ databases">
        <title>Complete sequence of Shewanella putrefaciens CN-32.</title>
        <authorList>
            <consortium name="US DOE Joint Genome Institute"/>
            <person name="Copeland A."/>
            <person name="Lucas S."/>
            <person name="Lapidus A."/>
            <person name="Barry K."/>
            <person name="Detter J.C."/>
            <person name="Glavina del Rio T."/>
            <person name="Hammon N."/>
            <person name="Israni S."/>
            <person name="Dalin E."/>
            <person name="Tice H."/>
            <person name="Pitluck S."/>
            <person name="Chain P."/>
            <person name="Malfatti S."/>
            <person name="Shin M."/>
            <person name="Vergez L."/>
            <person name="Schmutz J."/>
            <person name="Larimer F."/>
            <person name="Land M."/>
            <person name="Hauser L."/>
            <person name="Kyrpides N."/>
            <person name="Mikhailova N."/>
            <person name="Romine M.F."/>
            <person name="Fredrickson J."/>
            <person name="Tiedje J."/>
            <person name="Richardson P."/>
        </authorList>
    </citation>
    <scope>NUCLEOTIDE SEQUENCE [LARGE SCALE GENOMIC DNA]</scope>
    <source>
        <strain>CN-32 / ATCC BAA-453</strain>
    </source>
</reference>